<protein>
    <recommendedName>
        <fullName evidence="1">Small ribosomal subunit protein uS8</fullName>
    </recommendedName>
    <alternativeName>
        <fullName evidence="2">30S ribosomal protein S8</fullName>
    </alternativeName>
</protein>
<gene>
    <name evidence="1" type="primary">rpsH</name>
    <name type="ordered locus">Lm4b_02585</name>
</gene>
<reference key="1">
    <citation type="journal article" date="2012" name="BMC Genomics">
        <title>Comparative genomics and transcriptomics of lineages I, II, and III strains of Listeria monocytogenes.</title>
        <authorList>
            <person name="Hain T."/>
            <person name="Ghai R."/>
            <person name="Billion A."/>
            <person name="Kuenne C.T."/>
            <person name="Steinweg C."/>
            <person name="Izar B."/>
            <person name="Mohamed W."/>
            <person name="Mraheil M."/>
            <person name="Domann E."/>
            <person name="Schaffrath S."/>
            <person name="Karst U."/>
            <person name="Goesmann A."/>
            <person name="Oehm S."/>
            <person name="Puhler A."/>
            <person name="Merkl R."/>
            <person name="Vorwerk S."/>
            <person name="Glaser P."/>
            <person name="Garrido P."/>
            <person name="Rusniok C."/>
            <person name="Buchrieser C."/>
            <person name="Goebel W."/>
            <person name="Chakraborty T."/>
        </authorList>
    </citation>
    <scope>NUCLEOTIDE SEQUENCE [LARGE SCALE GENOMIC DNA]</scope>
    <source>
        <strain>CLIP80459</strain>
    </source>
</reference>
<proteinExistence type="inferred from homology"/>
<accession>C1KZG6</accession>
<keyword id="KW-0687">Ribonucleoprotein</keyword>
<keyword id="KW-0689">Ribosomal protein</keyword>
<keyword id="KW-0694">RNA-binding</keyword>
<keyword id="KW-0699">rRNA-binding</keyword>
<evidence type="ECO:0000255" key="1">
    <source>
        <dbReference type="HAMAP-Rule" id="MF_01302"/>
    </source>
</evidence>
<evidence type="ECO:0000305" key="2"/>
<organism>
    <name type="scientific">Listeria monocytogenes serotype 4b (strain CLIP80459)</name>
    <dbReference type="NCBI Taxonomy" id="568819"/>
    <lineage>
        <taxon>Bacteria</taxon>
        <taxon>Bacillati</taxon>
        <taxon>Bacillota</taxon>
        <taxon>Bacilli</taxon>
        <taxon>Bacillales</taxon>
        <taxon>Listeriaceae</taxon>
        <taxon>Listeria</taxon>
    </lineage>
</organism>
<comment type="function">
    <text evidence="1">One of the primary rRNA binding proteins, it binds directly to 16S rRNA central domain where it helps coordinate assembly of the platform of the 30S subunit.</text>
</comment>
<comment type="subunit">
    <text evidence="1">Part of the 30S ribosomal subunit. Contacts proteins S5 and S12.</text>
</comment>
<comment type="similarity">
    <text evidence="1">Belongs to the universal ribosomal protein uS8 family.</text>
</comment>
<dbReference type="EMBL" id="FM242711">
    <property type="protein sequence ID" value="CAS06339.1"/>
    <property type="molecule type" value="Genomic_DNA"/>
</dbReference>
<dbReference type="RefSeq" id="WP_003720937.1">
    <property type="nucleotide sequence ID" value="NC_012488.1"/>
</dbReference>
<dbReference type="SMR" id="C1KZG6"/>
<dbReference type="GeneID" id="93240499"/>
<dbReference type="KEGG" id="lmc:Lm4b_02585"/>
<dbReference type="HOGENOM" id="CLU_098428_0_2_9"/>
<dbReference type="GO" id="GO:1990904">
    <property type="term" value="C:ribonucleoprotein complex"/>
    <property type="evidence" value="ECO:0007669"/>
    <property type="project" value="UniProtKB-KW"/>
</dbReference>
<dbReference type="GO" id="GO:0005840">
    <property type="term" value="C:ribosome"/>
    <property type="evidence" value="ECO:0007669"/>
    <property type="project" value="UniProtKB-KW"/>
</dbReference>
<dbReference type="GO" id="GO:0019843">
    <property type="term" value="F:rRNA binding"/>
    <property type="evidence" value="ECO:0007669"/>
    <property type="project" value="UniProtKB-UniRule"/>
</dbReference>
<dbReference type="GO" id="GO:0003735">
    <property type="term" value="F:structural constituent of ribosome"/>
    <property type="evidence" value="ECO:0007669"/>
    <property type="project" value="InterPro"/>
</dbReference>
<dbReference type="GO" id="GO:0006412">
    <property type="term" value="P:translation"/>
    <property type="evidence" value="ECO:0007669"/>
    <property type="project" value="UniProtKB-UniRule"/>
</dbReference>
<dbReference type="FunFam" id="3.30.1370.30:FF:000002">
    <property type="entry name" value="30S ribosomal protein S8"/>
    <property type="match status" value="1"/>
</dbReference>
<dbReference type="FunFam" id="3.30.1490.10:FF:000001">
    <property type="entry name" value="30S ribosomal protein S8"/>
    <property type="match status" value="1"/>
</dbReference>
<dbReference type="Gene3D" id="3.30.1370.30">
    <property type="match status" value="1"/>
</dbReference>
<dbReference type="Gene3D" id="3.30.1490.10">
    <property type="match status" value="1"/>
</dbReference>
<dbReference type="HAMAP" id="MF_01302_B">
    <property type="entry name" value="Ribosomal_uS8_B"/>
    <property type="match status" value="1"/>
</dbReference>
<dbReference type="InterPro" id="IPR000630">
    <property type="entry name" value="Ribosomal_uS8"/>
</dbReference>
<dbReference type="InterPro" id="IPR047863">
    <property type="entry name" value="Ribosomal_uS8_CS"/>
</dbReference>
<dbReference type="InterPro" id="IPR035987">
    <property type="entry name" value="Ribosomal_uS8_sf"/>
</dbReference>
<dbReference type="NCBIfam" id="NF001109">
    <property type="entry name" value="PRK00136.1"/>
    <property type="match status" value="1"/>
</dbReference>
<dbReference type="PANTHER" id="PTHR11758">
    <property type="entry name" value="40S RIBOSOMAL PROTEIN S15A"/>
    <property type="match status" value="1"/>
</dbReference>
<dbReference type="Pfam" id="PF00410">
    <property type="entry name" value="Ribosomal_S8"/>
    <property type="match status" value="1"/>
</dbReference>
<dbReference type="SUPFAM" id="SSF56047">
    <property type="entry name" value="Ribosomal protein S8"/>
    <property type="match status" value="1"/>
</dbReference>
<dbReference type="PROSITE" id="PS00053">
    <property type="entry name" value="RIBOSOMAL_S8"/>
    <property type="match status" value="1"/>
</dbReference>
<name>RS8_LISMC</name>
<feature type="chain" id="PRO_1000214257" description="Small ribosomal subunit protein uS8">
    <location>
        <begin position="1"/>
        <end position="132"/>
    </location>
</feature>
<sequence>MVMTDPIADFLTRIRNANMVKHDKLELPASKIKKEIAEILKREGFIRDVEYIEDDNAGTIRVFLKYGATGERVITGLKRISKPGLRVYAKSTEVPKVLNGLGIAIVSTSQGVLTDKEARAKQVGGEVLAYVW</sequence>